<protein>
    <recommendedName>
        <fullName>Probable endonuclease 4</fullName>
        <ecNumber>3.1.21.2</ecNumber>
    </recommendedName>
    <alternativeName>
        <fullName>Endodeoxyribonuclease IV</fullName>
    </alternativeName>
    <alternativeName>
        <fullName>Endonuclease IV</fullName>
    </alternativeName>
</protein>
<evidence type="ECO:0000250" key="1"/>
<evidence type="ECO:0000305" key="2"/>
<comment type="function">
    <text>Endonuclease IV plays a role in DNA repair. It cleaves phosphodiester bonds at apurinic or apyrimidinic (AP) sites, generating a 3'-hydroxyl group and a 5'-terminal sugar phosphate.</text>
</comment>
<comment type="catalytic activity">
    <reaction>
        <text>Endonucleolytic cleavage to 5'-phosphooligonucleotide end-products.</text>
        <dbReference type="EC" id="3.1.21.2"/>
    </reaction>
</comment>
<comment type="cofactor">
    <cofactor evidence="1">
        <name>Zn(2+)</name>
        <dbReference type="ChEBI" id="CHEBI:29105"/>
    </cofactor>
    <text evidence="1">Binds 3 Zn(2+) ions.</text>
</comment>
<comment type="similarity">
    <text evidence="2">Belongs to the AP endonuclease 2 family.</text>
</comment>
<feature type="chain" id="PRO_0000190889" description="Probable endonuclease 4">
    <location>
        <begin position="1" status="less than"/>
        <end position="35"/>
    </location>
</feature>
<feature type="binding site" evidence="1">
    <location>
        <position position="15"/>
    </location>
    <ligand>
        <name>Zn(2+)</name>
        <dbReference type="ChEBI" id="CHEBI:29105"/>
        <label>2</label>
    </ligand>
</feature>
<feature type="non-terminal residue">
    <location>
        <position position="1"/>
    </location>
</feature>
<dbReference type="EC" id="3.1.21.2"/>
<dbReference type="EMBL" id="Z21953">
    <property type="status" value="NOT_ANNOTATED_CDS"/>
    <property type="molecule type" value="Genomic_DNA"/>
</dbReference>
<dbReference type="SMR" id="P42691"/>
<dbReference type="STRING" id="1443113.LC20_03577"/>
<dbReference type="eggNOG" id="COG0648">
    <property type="taxonomic scope" value="Bacteria"/>
</dbReference>
<dbReference type="GO" id="GO:0008833">
    <property type="term" value="F:deoxyribonuclease IV (phage-T4-induced) activity"/>
    <property type="evidence" value="ECO:0007669"/>
    <property type="project" value="UniProtKB-EC"/>
</dbReference>
<dbReference type="GO" id="GO:0046872">
    <property type="term" value="F:metal ion binding"/>
    <property type="evidence" value="ECO:0007669"/>
    <property type="project" value="UniProtKB-KW"/>
</dbReference>
<dbReference type="GO" id="GO:0006281">
    <property type="term" value="P:DNA repair"/>
    <property type="evidence" value="ECO:0007669"/>
    <property type="project" value="UniProtKB-KW"/>
</dbReference>
<dbReference type="Gene3D" id="3.20.20.150">
    <property type="entry name" value="Divalent-metal-dependent TIM barrel enzymes"/>
    <property type="match status" value="1"/>
</dbReference>
<dbReference type="InterPro" id="IPR036237">
    <property type="entry name" value="Xyl_isomerase-like_sf"/>
</dbReference>
<dbReference type="SUPFAM" id="SSF51658">
    <property type="entry name" value="Xylose isomerase-like"/>
    <property type="match status" value="1"/>
</dbReference>
<reference key="1">
    <citation type="journal article" date="1993" name="Mol. Microbiol.">
        <title>The Myf fibrillae of Yersinia enterocolitica.</title>
        <authorList>
            <person name="Iriarte M."/>
            <person name="Vanooteghem J.-C."/>
            <person name="Delor I."/>
            <person name="Diaz R."/>
            <person name="Knutton S."/>
            <person name="Cornelis G.R."/>
        </authorList>
    </citation>
    <scope>NUCLEOTIDE SEQUENCE [GENOMIC DNA]</scope>
    <source>
        <strain>W1024 / Serotype O:9</strain>
    </source>
</reference>
<reference key="2">
    <citation type="unpublished observations" date="1995-05">
        <authorList>
            <person name="Robison K."/>
        </authorList>
    </citation>
    <scope>IDENTIFICATION</scope>
</reference>
<organism>
    <name type="scientific">Yersinia enterocolitica</name>
    <dbReference type="NCBI Taxonomy" id="630"/>
    <lineage>
        <taxon>Bacteria</taxon>
        <taxon>Pseudomonadati</taxon>
        <taxon>Pseudomonadota</taxon>
        <taxon>Gammaproteobacteria</taxon>
        <taxon>Enterobacterales</taxon>
        <taxon>Yersiniaceae</taxon>
        <taxon>Yersinia</taxon>
    </lineage>
</organism>
<sequence length="35" mass="4138">IMRDPRFDNIPLILETVNPDIWAEEIAWLKSQAEI</sequence>
<accession>P42691</accession>
<keyword id="KW-0227">DNA damage</keyword>
<keyword id="KW-0234">DNA repair</keyword>
<keyword id="KW-0255">Endonuclease</keyword>
<keyword id="KW-0378">Hydrolase</keyword>
<keyword id="KW-0479">Metal-binding</keyword>
<keyword id="KW-0540">Nuclease</keyword>
<keyword id="KW-0862">Zinc</keyword>
<gene>
    <name type="primary">nfo</name>
</gene>
<proteinExistence type="inferred from homology"/>
<name>END4_YEREN</name>